<accession>P16052</accession>
<proteinExistence type="evidence at transcript level"/>
<feature type="initiator methionine" description="Removed">
    <location>
        <position position="1"/>
    </location>
</feature>
<feature type="chain" id="PRO_0000203720" description="Guanine nucleotide-binding protein G(s) subunit alpha">
    <location>
        <begin position="2"/>
        <end position="394"/>
    </location>
</feature>
<feature type="domain" description="G-alpha" evidence="5">
    <location>
        <begin position="39"/>
        <end position="394"/>
    </location>
</feature>
<feature type="region of interest" description="Disordered" evidence="6">
    <location>
        <begin position="1"/>
        <end position="25"/>
    </location>
</feature>
<feature type="region of interest" description="G1 motif" evidence="5">
    <location>
        <begin position="42"/>
        <end position="55"/>
    </location>
</feature>
<feature type="region of interest" description="Disordered" evidence="6">
    <location>
        <begin position="68"/>
        <end position="90"/>
    </location>
</feature>
<feature type="region of interest" description="G2 motif" evidence="5">
    <location>
        <begin position="196"/>
        <end position="204"/>
    </location>
</feature>
<feature type="region of interest" description="G3 motif" evidence="5">
    <location>
        <begin position="219"/>
        <end position="228"/>
    </location>
</feature>
<feature type="region of interest" description="G4 motif" evidence="5">
    <location>
        <begin position="288"/>
        <end position="295"/>
    </location>
</feature>
<feature type="region of interest" description="G5 motif" evidence="5">
    <location>
        <begin position="364"/>
        <end position="369"/>
    </location>
</feature>
<feature type="compositionally biased region" description="Basic and acidic residues" evidence="6">
    <location>
        <begin position="7"/>
        <end position="25"/>
    </location>
</feature>
<feature type="binding site" evidence="2">
    <location>
        <begin position="47"/>
        <end position="55"/>
    </location>
    <ligand>
        <name>GTP</name>
        <dbReference type="ChEBI" id="CHEBI:37565"/>
    </ligand>
</feature>
<feature type="binding site" evidence="2">
    <location>
        <position position="54"/>
    </location>
    <ligand>
        <name>Mg(2+)</name>
        <dbReference type="ChEBI" id="CHEBI:18420"/>
    </ligand>
</feature>
<feature type="binding site" evidence="2">
    <location>
        <begin position="197"/>
        <end position="204"/>
    </location>
    <ligand>
        <name>GTP</name>
        <dbReference type="ChEBI" id="CHEBI:37565"/>
    </ligand>
</feature>
<feature type="binding site" evidence="2">
    <location>
        <position position="204"/>
    </location>
    <ligand>
        <name>Mg(2+)</name>
        <dbReference type="ChEBI" id="CHEBI:18420"/>
    </ligand>
</feature>
<feature type="binding site" evidence="2">
    <location>
        <begin position="223"/>
        <end position="227"/>
    </location>
    <ligand>
        <name>GTP</name>
        <dbReference type="ChEBI" id="CHEBI:37565"/>
    </ligand>
</feature>
<feature type="binding site" evidence="2">
    <location>
        <begin position="292"/>
        <end position="295"/>
    </location>
    <ligand>
        <name>GTP</name>
        <dbReference type="ChEBI" id="CHEBI:37565"/>
    </ligand>
</feature>
<feature type="binding site" evidence="2">
    <location>
        <position position="366"/>
    </location>
    <ligand>
        <name>GTP</name>
        <dbReference type="ChEBI" id="CHEBI:37565"/>
    </ligand>
</feature>
<feature type="lipid moiety-binding region" description="N-palmitoyl glycine" evidence="2">
    <location>
        <position position="2"/>
    </location>
</feature>
<feature type="lipid moiety-binding region" description="S-palmitoyl cysteine" evidence="1">
    <location>
        <position position="3"/>
    </location>
</feature>
<name>GNAS_CRILO</name>
<keyword id="KW-1003">Cell membrane</keyword>
<keyword id="KW-0342">GTP-binding</keyword>
<keyword id="KW-0449">Lipoprotein</keyword>
<keyword id="KW-0460">Magnesium</keyword>
<keyword id="KW-0472">Membrane</keyword>
<keyword id="KW-0479">Metal-binding</keyword>
<keyword id="KW-0547">Nucleotide-binding</keyword>
<keyword id="KW-0564">Palmitate</keyword>
<keyword id="KW-0807">Transducer</keyword>
<protein>
    <recommendedName>
        <fullName>Guanine nucleotide-binding protein G(s) subunit alpha</fullName>
    </recommendedName>
    <alternativeName>
        <fullName>Adenylate cyclase-stimulating G alpha protein</fullName>
    </alternativeName>
</protein>
<reference key="1">
    <citation type="journal article" date="1990" name="Nucleic Acids Res.">
        <title>The cDNA sequence of the alpha-subunit of the Chinese hamster adenylate cyclase-stimulatory G-protein.</title>
        <authorList>
            <person name="Mercken L."/>
            <person name="Moras V."/>
            <person name="Tocque B."/>
            <person name="Mayaux J.F."/>
        </authorList>
    </citation>
    <scope>NUCLEOTIDE SEQUENCE [MRNA]</scope>
    <source>
        <tissue>Lung</tissue>
    </source>
</reference>
<comment type="function">
    <text evidence="3">Guanine nucleotide-binding proteins (G proteins) function as transducers in numerous signaling pathways controlled by G protein-coupled receptors (GPCRs). Signaling involves the activation of adenylyl cyclases, resulting in increased levels of the signaling molecule cAMP. GNAS functions downstream of several GPCRs, including beta-adrenergic receptors. Stimulates the Ras signaling pathway via RAPGEF2.</text>
</comment>
<comment type="subunit">
    <text evidence="2 3">Heterotrimeric G proteins are composed of 3 units; alpha, beta and gamma. The alpha chain contains the guanine nucleotide binding site (By similarity). Interacts with CRY1; the interaction may block GPCR-mediated regulation of cAMP concentrations. Interacts with ADCY6 and stimulates its adenylyl cyclase activity (By similarity). Interacts with ADCY2 and ADCY5 (By similarity). Stimulates the ADCY5 adenylyl cyclase activity (By similarity). Interaction with SASH1 (By similarity).</text>
</comment>
<comment type="subcellular location">
    <subcellularLocation>
        <location evidence="4">Cell membrane</location>
        <topology evidence="4">Lipid-anchor</topology>
    </subcellularLocation>
</comment>
<comment type="similarity">
    <text evidence="7">Belongs to the G-alpha family. G(s) subfamily.</text>
</comment>
<dbReference type="EMBL" id="X17481">
    <property type="protein sequence ID" value="CAA35516.1"/>
    <property type="molecule type" value="mRNA"/>
</dbReference>
<dbReference type="SMR" id="P16052"/>
<dbReference type="GO" id="GO:0005737">
    <property type="term" value="C:cytoplasm"/>
    <property type="evidence" value="ECO:0007669"/>
    <property type="project" value="TreeGrafter"/>
</dbReference>
<dbReference type="GO" id="GO:0005834">
    <property type="term" value="C:heterotrimeric G-protein complex"/>
    <property type="evidence" value="ECO:0007669"/>
    <property type="project" value="TreeGrafter"/>
</dbReference>
<dbReference type="GO" id="GO:0010856">
    <property type="term" value="F:adenylate cyclase activator activity"/>
    <property type="evidence" value="ECO:0000250"/>
    <property type="project" value="UniProtKB"/>
</dbReference>
<dbReference type="GO" id="GO:0031698">
    <property type="term" value="F:beta-2 adrenergic receptor binding"/>
    <property type="evidence" value="ECO:0007669"/>
    <property type="project" value="TreeGrafter"/>
</dbReference>
<dbReference type="GO" id="GO:0051430">
    <property type="term" value="F:corticotropin-releasing hormone receptor 1 binding"/>
    <property type="evidence" value="ECO:0007669"/>
    <property type="project" value="TreeGrafter"/>
</dbReference>
<dbReference type="GO" id="GO:0031748">
    <property type="term" value="F:D1 dopamine receptor binding"/>
    <property type="evidence" value="ECO:0007669"/>
    <property type="project" value="TreeGrafter"/>
</dbReference>
<dbReference type="GO" id="GO:0031683">
    <property type="term" value="F:G-protein beta/gamma-subunit complex binding"/>
    <property type="evidence" value="ECO:0007669"/>
    <property type="project" value="InterPro"/>
</dbReference>
<dbReference type="GO" id="GO:0005525">
    <property type="term" value="F:GTP binding"/>
    <property type="evidence" value="ECO:0007669"/>
    <property type="project" value="UniProtKB-KW"/>
</dbReference>
<dbReference type="GO" id="GO:0003924">
    <property type="term" value="F:GTPase activity"/>
    <property type="evidence" value="ECO:0007669"/>
    <property type="project" value="InterPro"/>
</dbReference>
<dbReference type="GO" id="GO:0005159">
    <property type="term" value="F:insulin-like growth factor receptor binding"/>
    <property type="evidence" value="ECO:0007669"/>
    <property type="project" value="TreeGrafter"/>
</dbReference>
<dbReference type="GO" id="GO:0035255">
    <property type="term" value="F:ionotropic glutamate receptor binding"/>
    <property type="evidence" value="ECO:0007669"/>
    <property type="project" value="TreeGrafter"/>
</dbReference>
<dbReference type="GO" id="GO:0046872">
    <property type="term" value="F:metal ion binding"/>
    <property type="evidence" value="ECO:0007669"/>
    <property type="project" value="UniProtKB-KW"/>
</dbReference>
<dbReference type="GO" id="GO:0031852">
    <property type="term" value="F:mu-type opioid receptor binding"/>
    <property type="evidence" value="ECO:0007669"/>
    <property type="project" value="TreeGrafter"/>
</dbReference>
<dbReference type="GO" id="GO:0071880">
    <property type="term" value="P:adenylate cyclase-activating adrenergic receptor signaling pathway"/>
    <property type="evidence" value="ECO:0000250"/>
    <property type="project" value="UniProtKB"/>
</dbReference>
<dbReference type="GO" id="GO:0007191">
    <property type="term" value="P:adenylate cyclase-activating dopamine receptor signaling pathway"/>
    <property type="evidence" value="ECO:0007669"/>
    <property type="project" value="TreeGrafter"/>
</dbReference>
<dbReference type="GO" id="GO:0007189">
    <property type="term" value="P:adenylate cyclase-activating G protein-coupled receptor signaling pathway"/>
    <property type="evidence" value="ECO:0000250"/>
    <property type="project" value="UniProtKB"/>
</dbReference>
<dbReference type="GO" id="GO:0007606">
    <property type="term" value="P:sensory perception of chemical stimulus"/>
    <property type="evidence" value="ECO:0007669"/>
    <property type="project" value="TreeGrafter"/>
</dbReference>
<dbReference type="CDD" id="cd00066">
    <property type="entry name" value="G-alpha"/>
    <property type="match status" value="1"/>
</dbReference>
<dbReference type="FunFam" id="1.10.400.10:FF:000003">
    <property type="entry name" value="Guanine nucleotide-binding protein G(S) subunit alpha"/>
    <property type="match status" value="1"/>
</dbReference>
<dbReference type="FunFam" id="3.40.50.300:FF:006178">
    <property type="entry name" value="Guanine nucleotide-binding protein G(s) subunit alpha isoforms short"/>
    <property type="match status" value="2"/>
</dbReference>
<dbReference type="Gene3D" id="1.10.400.10">
    <property type="entry name" value="GI Alpha 1, domain 2-like"/>
    <property type="match status" value="1"/>
</dbReference>
<dbReference type="Gene3D" id="3.40.50.300">
    <property type="entry name" value="P-loop containing nucleotide triphosphate hydrolases"/>
    <property type="match status" value="1"/>
</dbReference>
<dbReference type="InterPro" id="IPR000367">
    <property type="entry name" value="Gprotein_alpha_S"/>
</dbReference>
<dbReference type="InterPro" id="IPR001019">
    <property type="entry name" value="Gprotein_alpha_su"/>
</dbReference>
<dbReference type="InterPro" id="IPR011025">
    <property type="entry name" value="GproteinA_insert"/>
</dbReference>
<dbReference type="InterPro" id="IPR027417">
    <property type="entry name" value="P-loop_NTPase"/>
</dbReference>
<dbReference type="PANTHER" id="PTHR10218">
    <property type="entry name" value="GTP-BINDING PROTEIN ALPHA SUBUNIT"/>
    <property type="match status" value="1"/>
</dbReference>
<dbReference type="PANTHER" id="PTHR10218:SF357">
    <property type="entry name" value="GUANINE NUCLEOTIDE-BINDING PROTEIN G(S) SUBUNIT ALPHA"/>
    <property type="match status" value="1"/>
</dbReference>
<dbReference type="Pfam" id="PF00503">
    <property type="entry name" value="G-alpha"/>
    <property type="match status" value="1"/>
</dbReference>
<dbReference type="PRINTS" id="PR00318">
    <property type="entry name" value="GPROTEINA"/>
</dbReference>
<dbReference type="PRINTS" id="PR00443">
    <property type="entry name" value="GPROTEINAS"/>
</dbReference>
<dbReference type="SMART" id="SM00275">
    <property type="entry name" value="G_alpha"/>
    <property type="match status" value="1"/>
</dbReference>
<dbReference type="SUPFAM" id="SSF52540">
    <property type="entry name" value="P-loop containing nucleoside triphosphate hydrolases"/>
    <property type="match status" value="1"/>
</dbReference>
<dbReference type="SUPFAM" id="SSF47895">
    <property type="entry name" value="Transducin (alpha subunit), insertion domain"/>
    <property type="match status" value="1"/>
</dbReference>
<dbReference type="PROSITE" id="PS51882">
    <property type="entry name" value="G_ALPHA"/>
    <property type="match status" value="1"/>
</dbReference>
<gene>
    <name type="primary">GNAS</name>
    <name type="synonym">GNAS1</name>
</gene>
<sequence length="394" mass="45665">MGCLGDSKTEDQRNEEKAQREANKKIEKQLQKDKQVYRATHRLLLLGAGESGKSTIVKQMRILHVNGFNGEGGEEDPQAARSNSDGEKATKVQDIKNNLKEAIETIVAAMSNLVPPVELANPENQFRVDYILSVMNVPNFDFPPEFYEHAKALWEDEGVRACYERSNEYQLIDCAQYFLDKIDVIKQADYVPSDQDLLRCRVLTSGIFETKFQVDKVNFHMFDVGGQRDERRKWIQCFNDVTAIIFVVASSSYNMVIREDNQTNRLQEALNLFKSIWNNRWLRTISVILFLNKQDLLAEKVLAGKSKIEDYFPEFARYTTPEDATPEPGEDPRVTRAKYFIRDEFLRISTASGDGRHYCYPHFTCAVDTENIRRVFNDCRDIIQRMHLRQYELL</sequence>
<organism>
    <name type="scientific">Cricetulus longicaudatus</name>
    <name type="common">Long-tailed dwarf hamster</name>
    <dbReference type="NCBI Taxonomy" id="10030"/>
    <lineage>
        <taxon>Eukaryota</taxon>
        <taxon>Metazoa</taxon>
        <taxon>Chordata</taxon>
        <taxon>Craniata</taxon>
        <taxon>Vertebrata</taxon>
        <taxon>Euteleostomi</taxon>
        <taxon>Mammalia</taxon>
        <taxon>Eutheria</taxon>
        <taxon>Euarchontoglires</taxon>
        <taxon>Glires</taxon>
        <taxon>Rodentia</taxon>
        <taxon>Myomorpha</taxon>
        <taxon>Muroidea</taxon>
        <taxon>Cricetidae</taxon>
        <taxon>Cricetinae</taxon>
        <taxon>Cricetulus</taxon>
    </lineage>
</organism>
<evidence type="ECO:0000250" key="1"/>
<evidence type="ECO:0000250" key="2">
    <source>
        <dbReference type="UniProtKB" id="P04896"/>
    </source>
</evidence>
<evidence type="ECO:0000250" key="3">
    <source>
        <dbReference type="UniProtKB" id="P63092"/>
    </source>
</evidence>
<evidence type="ECO:0000250" key="4">
    <source>
        <dbReference type="UniProtKB" id="P63094"/>
    </source>
</evidence>
<evidence type="ECO:0000255" key="5">
    <source>
        <dbReference type="PROSITE-ProRule" id="PRU01230"/>
    </source>
</evidence>
<evidence type="ECO:0000256" key="6">
    <source>
        <dbReference type="SAM" id="MobiDB-lite"/>
    </source>
</evidence>
<evidence type="ECO:0000305" key="7"/>